<feature type="chain" id="PRO_0000447824" description="Squalestatin tetraketide synthase">
    <location>
        <begin position="1"/>
        <end position="2603"/>
    </location>
</feature>
<feature type="domain" description="Ketosynthase family 3 (KS3)" evidence="3">
    <location>
        <begin position="29"/>
        <end position="455"/>
    </location>
</feature>
<feature type="domain" description="PKS/mFAS DH" evidence="4">
    <location>
        <begin position="1000"/>
        <end position="1314"/>
    </location>
</feature>
<feature type="domain" description="Carrier" evidence="2">
    <location>
        <begin position="2516"/>
        <end position="2593"/>
    </location>
</feature>
<feature type="region of interest" description="Disordered" evidence="5">
    <location>
        <begin position="463"/>
        <end position="512"/>
    </location>
</feature>
<feature type="region of interest" description="Malonyl-CoA:ACP transacylase (MAT) domain" evidence="1">
    <location>
        <begin position="608"/>
        <end position="931"/>
    </location>
</feature>
<feature type="region of interest" description="Dehydratase (DH) domain" evidence="1">
    <location>
        <begin position="1000"/>
        <end position="1314"/>
    </location>
</feature>
<feature type="region of interest" description="N-terminal hotdog fold" evidence="4">
    <location>
        <begin position="1000"/>
        <end position="1138"/>
    </location>
</feature>
<feature type="region of interest" description="C-terminal hotdog fold" evidence="4">
    <location>
        <begin position="1157"/>
        <end position="1314"/>
    </location>
</feature>
<feature type="region of interest" description="Methyltransferase (CMet) domain" evidence="1">
    <location>
        <begin position="1465"/>
        <end position="1665"/>
    </location>
</feature>
<feature type="region of interest" description="Enoyl reductase (ER) (ER) domain" evidence="1">
    <location>
        <begin position="1892"/>
        <end position="2205"/>
    </location>
</feature>
<feature type="region of interest" description="Ketoreductase (KR) domain" evidence="1">
    <location>
        <begin position="2228"/>
        <end position="2406"/>
    </location>
</feature>
<feature type="compositionally biased region" description="Gly residues" evidence="5">
    <location>
        <begin position="469"/>
        <end position="479"/>
    </location>
</feature>
<feature type="compositionally biased region" description="Low complexity" evidence="5">
    <location>
        <begin position="480"/>
        <end position="497"/>
    </location>
</feature>
<feature type="active site" description="For beta-ketoacyl synthase activity" evidence="3">
    <location>
        <position position="202"/>
    </location>
</feature>
<feature type="active site" description="For beta-ketoacyl synthase activity" evidence="3">
    <location>
        <position position="337"/>
    </location>
</feature>
<feature type="active site" description="For beta-ketoacyl synthase activity" evidence="3">
    <location>
        <position position="377"/>
    </location>
</feature>
<feature type="active site" description="Proton acceptor; for dehydratase activity" evidence="4">
    <location>
        <position position="1032"/>
    </location>
</feature>
<feature type="active site" description="Proton donor; for dehydratase activity" evidence="4">
    <location>
        <position position="1223"/>
    </location>
</feature>
<feature type="modified residue" description="O-(pantetheine 4'-phosphoryl)serine" evidence="2">
    <location>
        <position position="2553"/>
    </location>
</feature>
<proteinExistence type="evidence at protein level"/>
<keyword id="KW-0012">Acyltransferase</keyword>
<keyword id="KW-0489">Methyltransferase</keyword>
<keyword id="KW-0511">Multifunctional enzyme</keyword>
<keyword id="KW-0521">NADP</keyword>
<keyword id="KW-0560">Oxidoreductase</keyword>
<keyword id="KW-0596">Phosphopantetheine</keyword>
<keyword id="KW-0597">Phosphoprotein</keyword>
<keyword id="KW-0808">Transferase</keyword>
<sequence length="2603" mass="284189">MVPYYQPASSCGSNTMAAMDEHQHNEDATIPIAIIGMSCRFPGNATSPEKLWELCAQGRSAWSSIPKSRFRQEGFYNPNAERVGTSHVVGGHFLEEDPSLFDASFFNLSAEAAKTMDPQFRLQLESVYEAMESAGITLEHIAGSDTSVYAGACFRDYHDSLVRDPDLVPRFLLTGNGAAMSSNRVSHFYDLRGASMTVDTGCSTTLTALHLACQGLRNRESKTSIVTGANVILNPDMFVTMSSLGLLGPEGKSHTFDARANGYGRGEGIATVIIKRLDDALRAQDPIRCIIRGTALNQDGRTATLTSPSQTAQSDLIRACYRAAALDPNDTAFLAAHGTGTRTGDAVEIAAAADVFGEKRSPERPLWIGSVKTNIGHSEATSGLASVIQAALALEKGLIPPNINFKEPNEKLGQVSAAVRVPSNLQKWPSVSGVRRASVNNFGYGGANAHVILESGIPGHTPIANGSGRSNGTGNGHNGANGTTNGHNGTNGTTNGHFDATQATNGHYGTDETPDYAPLDSFVISISAKEEASARSMVTNLADYLRTLQVQDETKHFKSIAHTLGSHRSMFKWTAAKSITGPEELIAAAEGGQFQASRALERTRLGFVFTGQGAQWFAMGRELINTYPVFRQSLDRADRYLKEFGCEWSIIDELSRDAENSNVNDMTLSPPLCTAVQISLVQLLESWGIVPTAVTGHSSGEIAAAYAAGALDFKSAMAVTYFRGEVGLACQDKIVGKGGMIAVGLGPEDAEDRIARVQSGKIVVACINSQSSVTVSGDLSGIVELEDLLKAEGVFARRVKVQAAYHSHHMQVIANGYLTSLKDMLKPTKKFGKIIYSSPTTGRRETNAKLMASAQHWVNNMLSPVRFAESFQNMCFSNRNSSQSEEIFQDVDIVLEVGPHGMLQGPIQQMMSLPIFERARLPYISCLLRGQSAVHTMQTVAAGLMGWGYRVDMVAVNFPQGTYGVKILHDLPSYPWNHDNSHWWEPRLNKAHRQRVHPPHDLLGSLIVGRDLREPTWRHFIRVQDIPWIRDHVVQSALVYPGAGFICMAMEAMVQLHELRDSQSRKVAGYRLAEVDILRAMLIPDTSEGLEAHISLRPCSTKLLLTNEWYDFCVSSVGDDDKFVDHCRGRITIEFDTSGSADTPRTSLRERSRSTGLMRSVDPSNLYSFLRAQGIYHGPIFQNLKTISSRKDHSESSFVVANTASVMPNGFQSPHVIHPTTLDSIFQGAYTALPGAGLDQNTAMIPRSIQELYLSSALTSDVGQCLVSDTSLIRYDGQSFTVNVDVSSKADSEHTPVLEIKGLRNQSVGQMAPQPGDSSNNDLCFKLDWAPDISSVKQERLKEKFGFPLDPTEADIIMGLRQACIHFIHRSLQSLTAPDRDQLDWHQKRFYDWMVLQIQLAEEDRLAPNSSAWLQCSSSDEQKLLENVRASSVNGQMVVHVGKSMLAILRHEIAPLELMLQDKLLYRYYTDAIKWDRSYQQIDQLVKLHAHKCPTAKIIEIGAGTGGCTRAVLDALSNQGIARCAQYDFTDVSSGFFEAAQQKFAAFDDVIRFQKLDIEKDIEMQGFECGSYDLVIASQVLHATGKMEHTMANVRKLLKPGGKLLLVETTRDEMDLQLVFGLLPGWWLSSEEERQMSPSLSTNSWEKVLKKTGFDGLDIELRDCDSDEFYSFSVMMATASSTIASSSMAFAIVYGEVPLPDQFLDDMKTAISSSAVSDPVVGHLDSIDATGKFCIFIEDPETDILSSPDEKSYASIQKLVTRCKGLIWVSRGGAMHGTRPNSSLKTGLLRTLRLEYTEKRFISLDLDSARPQWNHDSITTINEVLCGALAQNADSSIKDSEFAEQDGQLFVPRISCDIARNEDLSSDSNSPAQMEPFHQPGKLLQMGIKTPGLIDTLQFSKTDATDNLPNDYIEIEPKAFGLNFRDVMVAMGQLEESIMGFECAGVVRRVGPSSAGHNIKVGDRVCALLGGQWTNTVRVHWHSVAPIPQAMDWETAASIPIVFVTAYISLVKIARMQAGETVLIHAASGGVGQAAIILAKHVGAEIFATVGTDEKRDLLIKEYKIPDDHIFSSRNALFAKSIRQRTNGKGVDVVLNCLAGGLLQESFDCLADFGRFIEIGKRDIELNHCLNMGMFARSATFTAVDLIAIGRDRSYMFAEALPKIMTLLQEKAIRPVTPISIYKIGDIETAFRLMQAGKHMGKIVITAPEDAMVPVITRPPKLQLRPDASYLIVGGLGGIGRSLCKNFVENGARSLVLLSRNANVSQQSGEFLDELRSTGCIVGVVDCDISSKTQVEATMLRLKKDMLPIRGIVHAGMVLQDSVFERMSLDDYNTAIRPKVQGSWNLHSGLSDCDLDFFIMLSSLAGVSGSASQANYTAGGAYQDALAKYRRAQGLSAVSIDLGMVQSVGYVAETKGVAERLVRMGYSPISEMEVLKIVEHAITNPPPEASSAQIITGISTKPGRHWTESSWLQDARFATLRERARDVKELSNSQGGAQDKQLAAGQELSMATSLVEAIDVVGRAITAKLATMFLIAAESIIASKSLSEYGVDSLVAVELRNWLAAQLSSDVSVFDVTQSQSLTALATTVATKSSRIDKSLLVA</sequence>
<reference key="1">
    <citation type="journal article" date="2001" name="Chem. Biol.">
        <title>Design and utility of oligonucleotide gene probes for fungal polyketide synthases.</title>
        <authorList>
            <person name="Nicholson T.P."/>
            <person name="Rudd B.A."/>
            <person name="Dawson M."/>
            <person name="Lazarus C.M."/>
            <person name="Simpson T.J."/>
            <person name="Cox R.J."/>
        </authorList>
    </citation>
    <scope>NUCLEOTIDE SEQUENCE [MRNA]</scope>
    <scope>DOMAIN</scope>
</reference>
<reference key="2">
    <citation type="journal article" date="2004" name="Chem. Commun. (Camb.)">
        <title>Rapid cloning and expression of a fungal polyketide synthase gene involved in squalestatin biosynthesis.</title>
        <authorList>
            <person name="Cox R.J."/>
            <person name="Glod F."/>
            <person name="Hurley D."/>
            <person name="Lazarus C.M."/>
            <person name="Nicholson T.P."/>
            <person name="Rudd B.A."/>
            <person name="Simpson T.J."/>
            <person name="Wilkinson B."/>
            <person name="Zhang Y."/>
        </authorList>
    </citation>
    <scope>FUNCTION</scope>
    <scope>CATALYTIC ACTIVITY</scope>
    <scope>PATHWAY</scope>
</reference>
<name>SQTKS_PHOSC</name>
<protein>
    <recommendedName>
        <fullName evidence="8">Squalestatin tetraketide synthase</fullName>
        <shortName evidence="8">SQTKS</shortName>
        <ecNumber evidence="6">2.3.1.-</ecNumber>
    </recommendedName>
    <alternativeName>
        <fullName evidence="7">Highly reducing polyketide synthase 1</fullName>
        <shortName evidence="7">HR-PKS 1</shortName>
    </alternativeName>
    <alternativeName>
        <fullName evidence="8">Squalestatin S1 biosynthesis cluster protein pks1</fullName>
    </alternativeName>
</protein>
<evidence type="ECO:0000255" key="1"/>
<evidence type="ECO:0000255" key="2">
    <source>
        <dbReference type="PROSITE-ProRule" id="PRU00258"/>
    </source>
</evidence>
<evidence type="ECO:0000255" key="3">
    <source>
        <dbReference type="PROSITE-ProRule" id="PRU01348"/>
    </source>
</evidence>
<evidence type="ECO:0000255" key="4">
    <source>
        <dbReference type="PROSITE-ProRule" id="PRU01363"/>
    </source>
</evidence>
<evidence type="ECO:0000256" key="5">
    <source>
        <dbReference type="SAM" id="MobiDB-lite"/>
    </source>
</evidence>
<evidence type="ECO:0000269" key="6">
    <source>
    </source>
</evidence>
<evidence type="ECO:0000303" key="7">
    <source>
    </source>
</evidence>
<evidence type="ECO:0000303" key="8">
    <source>
    </source>
</evidence>
<evidence type="ECO:0000305" key="9">
    <source>
    </source>
</evidence>
<dbReference type="EC" id="2.3.1.-" evidence="6"/>
<dbReference type="EMBL" id="AY217789">
    <property type="protein sequence ID" value="AAO62426.1"/>
    <property type="molecule type" value="mRNA"/>
</dbReference>
<dbReference type="SMR" id="Q86ZD9"/>
<dbReference type="GO" id="GO:0004312">
    <property type="term" value="F:fatty acid synthase activity"/>
    <property type="evidence" value="ECO:0007669"/>
    <property type="project" value="TreeGrafter"/>
</dbReference>
<dbReference type="GO" id="GO:0008168">
    <property type="term" value="F:methyltransferase activity"/>
    <property type="evidence" value="ECO:0007669"/>
    <property type="project" value="UniProtKB-KW"/>
</dbReference>
<dbReference type="GO" id="GO:0016491">
    <property type="term" value="F:oxidoreductase activity"/>
    <property type="evidence" value="ECO:0007669"/>
    <property type="project" value="UniProtKB-KW"/>
</dbReference>
<dbReference type="GO" id="GO:0031177">
    <property type="term" value="F:phosphopantetheine binding"/>
    <property type="evidence" value="ECO:0007669"/>
    <property type="project" value="InterPro"/>
</dbReference>
<dbReference type="GO" id="GO:0006633">
    <property type="term" value="P:fatty acid biosynthetic process"/>
    <property type="evidence" value="ECO:0007669"/>
    <property type="project" value="TreeGrafter"/>
</dbReference>
<dbReference type="GO" id="GO:0032259">
    <property type="term" value="P:methylation"/>
    <property type="evidence" value="ECO:0007669"/>
    <property type="project" value="UniProtKB-KW"/>
</dbReference>
<dbReference type="GO" id="GO:0030639">
    <property type="term" value="P:polyketide biosynthetic process"/>
    <property type="evidence" value="ECO:0007669"/>
    <property type="project" value="UniProtKB-ARBA"/>
</dbReference>
<dbReference type="CDD" id="cd02440">
    <property type="entry name" value="AdoMet_MTases"/>
    <property type="match status" value="1"/>
</dbReference>
<dbReference type="CDD" id="cd05195">
    <property type="entry name" value="enoyl_red"/>
    <property type="match status" value="1"/>
</dbReference>
<dbReference type="CDD" id="cd00833">
    <property type="entry name" value="PKS"/>
    <property type="match status" value="1"/>
</dbReference>
<dbReference type="FunFam" id="3.40.50.720:FF:000209">
    <property type="entry name" value="Polyketide synthase Pks12"/>
    <property type="match status" value="1"/>
</dbReference>
<dbReference type="FunFam" id="3.40.366.10:FF:000002">
    <property type="entry name" value="Probable polyketide synthase 2"/>
    <property type="match status" value="1"/>
</dbReference>
<dbReference type="Gene3D" id="3.40.47.10">
    <property type="match status" value="1"/>
</dbReference>
<dbReference type="Gene3D" id="1.10.1200.10">
    <property type="entry name" value="ACP-like"/>
    <property type="match status" value="1"/>
</dbReference>
<dbReference type="Gene3D" id="3.40.366.10">
    <property type="entry name" value="Malonyl-Coenzyme A Acyl Carrier Protein, domain 2"/>
    <property type="match status" value="1"/>
</dbReference>
<dbReference type="Gene3D" id="3.90.180.10">
    <property type="entry name" value="Medium-chain alcohol dehydrogenases, catalytic domain"/>
    <property type="match status" value="1"/>
</dbReference>
<dbReference type="Gene3D" id="3.40.50.720">
    <property type="entry name" value="NAD(P)-binding Rossmann-like Domain"/>
    <property type="match status" value="2"/>
</dbReference>
<dbReference type="Gene3D" id="3.10.129.110">
    <property type="entry name" value="Polyketide synthase dehydratase"/>
    <property type="match status" value="1"/>
</dbReference>
<dbReference type="Gene3D" id="3.40.50.150">
    <property type="entry name" value="Vaccinia Virus protein VP39"/>
    <property type="match status" value="1"/>
</dbReference>
<dbReference type="InterPro" id="IPR001227">
    <property type="entry name" value="Ac_transferase_dom_sf"/>
</dbReference>
<dbReference type="InterPro" id="IPR036736">
    <property type="entry name" value="ACP-like_sf"/>
</dbReference>
<dbReference type="InterPro" id="IPR014043">
    <property type="entry name" value="Acyl_transferase_dom"/>
</dbReference>
<dbReference type="InterPro" id="IPR016035">
    <property type="entry name" value="Acyl_Trfase/lysoPLipase"/>
</dbReference>
<dbReference type="InterPro" id="IPR013154">
    <property type="entry name" value="ADH-like_N"/>
</dbReference>
<dbReference type="InterPro" id="IPR011032">
    <property type="entry name" value="GroES-like_sf"/>
</dbReference>
<dbReference type="InterPro" id="IPR014031">
    <property type="entry name" value="Ketoacyl_synth_C"/>
</dbReference>
<dbReference type="InterPro" id="IPR014030">
    <property type="entry name" value="Ketoacyl_synth_N"/>
</dbReference>
<dbReference type="InterPro" id="IPR016036">
    <property type="entry name" value="Malonyl_transacylase_ACP-bd"/>
</dbReference>
<dbReference type="InterPro" id="IPR013217">
    <property type="entry name" value="Methyltransf_12"/>
</dbReference>
<dbReference type="InterPro" id="IPR036291">
    <property type="entry name" value="NAD(P)-bd_dom_sf"/>
</dbReference>
<dbReference type="InterPro" id="IPR056501">
    <property type="entry name" value="NAD-bd_HRPKS_sdrA"/>
</dbReference>
<dbReference type="InterPro" id="IPR020841">
    <property type="entry name" value="PKS_Beta-ketoAc_synthase_dom"/>
</dbReference>
<dbReference type="InterPro" id="IPR042104">
    <property type="entry name" value="PKS_dehydratase_sf"/>
</dbReference>
<dbReference type="InterPro" id="IPR020807">
    <property type="entry name" value="PKS_DH"/>
</dbReference>
<dbReference type="InterPro" id="IPR049551">
    <property type="entry name" value="PKS_DH_C"/>
</dbReference>
<dbReference type="InterPro" id="IPR049552">
    <property type="entry name" value="PKS_DH_N"/>
</dbReference>
<dbReference type="InterPro" id="IPR020843">
    <property type="entry name" value="PKS_ER"/>
</dbReference>
<dbReference type="InterPro" id="IPR013968">
    <property type="entry name" value="PKS_KR"/>
</dbReference>
<dbReference type="InterPro" id="IPR049900">
    <property type="entry name" value="PKS_mFAS_DH"/>
</dbReference>
<dbReference type="InterPro" id="IPR050091">
    <property type="entry name" value="PKS_NRPS_Biosynth_Enz"/>
</dbReference>
<dbReference type="InterPro" id="IPR020806">
    <property type="entry name" value="PKS_PP-bd"/>
</dbReference>
<dbReference type="InterPro" id="IPR009081">
    <property type="entry name" value="PP-bd_ACP"/>
</dbReference>
<dbReference type="InterPro" id="IPR006162">
    <property type="entry name" value="Ppantetheine_attach_site"/>
</dbReference>
<dbReference type="InterPro" id="IPR029063">
    <property type="entry name" value="SAM-dependent_MTases_sf"/>
</dbReference>
<dbReference type="InterPro" id="IPR016039">
    <property type="entry name" value="Thiolase-like"/>
</dbReference>
<dbReference type="PANTHER" id="PTHR43775:SF29">
    <property type="entry name" value="ASPERFURANONE POLYKETIDE SYNTHASE AFOG-RELATED"/>
    <property type="match status" value="1"/>
</dbReference>
<dbReference type="PANTHER" id="PTHR43775">
    <property type="entry name" value="FATTY ACID SYNTHASE"/>
    <property type="match status" value="1"/>
</dbReference>
<dbReference type="Pfam" id="PF23297">
    <property type="entry name" value="ACP_SdgA_C"/>
    <property type="match status" value="1"/>
</dbReference>
<dbReference type="Pfam" id="PF00698">
    <property type="entry name" value="Acyl_transf_1"/>
    <property type="match status" value="1"/>
</dbReference>
<dbReference type="Pfam" id="PF08240">
    <property type="entry name" value="ADH_N"/>
    <property type="match status" value="1"/>
</dbReference>
<dbReference type="Pfam" id="PF13602">
    <property type="entry name" value="ADH_zinc_N_2"/>
    <property type="match status" value="1"/>
</dbReference>
<dbReference type="Pfam" id="PF00109">
    <property type="entry name" value="ketoacyl-synt"/>
    <property type="match status" value="1"/>
</dbReference>
<dbReference type="Pfam" id="PF02801">
    <property type="entry name" value="Ketoacyl-synt_C"/>
    <property type="match status" value="1"/>
</dbReference>
<dbReference type="Pfam" id="PF08659">
    <property type="entry name" value="KR"/>
    <property type="match status" value="1"/>
</dbReference>
<dbReference type="Pfam" id="PF08242">
    <property type="entry name" value="Methyltransf_12"/>
    <property type="match status" value="1"/>
</dbReference>
<dbReference type="Pfam" id="PF23114">
    <property type="entry name" value="NAD-bd_HRPKS_sdrA"/>
    <property type="match status" value="1"/>
</dbReference>
<dbReference type="Pfam" id="PF21089">
    <property type="entry name" value="PKS_DH_N"/>
    <property type="match status" value="1"/>
</dbReference>
<dbReference type="Pfam" id="PF14765">
    <property type="entry name" value="PS-DH"/>
    <property type="match status" value="1"/>
</dbReference>
<dbReference type="SMART" id="SM00827">
    <property type="entry name" value="PKS_AT"/>
    <property type="match status" value="1"/>
</dbReference>
<dbReference type="SMART" id="SM00826">
    <property type="entry name" value="PKS_DH"/>
    <property type="match status" value="1"/>
</dbReference>
<dbReference type="SMART" id="SM00829">
    <property type="entry name" value="PKS_ER"/>
    <property type="match status" value="1"/>
</dbReference>
<dbReference type="SMART" id="SM00822">
    <property type="entry name" value="PKS_KR"/>
    <property type="match status" value="1"/>
</dbReference>
<dbReference type="SMART" id="SM00825">
    <property type="entry name" value="PKS_KS"/>
    <property type="match status" value="1"/>
</dbReference>
<dbReference type="SMART" id="SM00823">
    <property type="entry name" value="PKS_PP"/>
    <property type="match status" value="1"/>
</dbReference>
<dbReference type="SUPFAM" id="SSF47336">
    <property type="entry name" value="ACP-like"/>
    <property type="match status" value="1"/>
</dbReference>
<dbReference type="SUPFAM" id="SSF52151">
    <property type="entry name" value="FabD/lysophospholipase-like"/>
    <property type="match status" value="1"/>
</dbReference>
<dbReference type="SUPFAM" id="SSF50129">
    <property type="entry name" value="GroES-like"/>
    <property type="match status" value="1"/>
</dbReference>
<dbReference type="SUPFAM" id="SSF51735">
    <property type="entry name" value="NAD(P)-binding Rossmann-fold domains"/>
    <property type="match status" value="2"/>
</dbReference>
<dbReference type="SUPFAM" id="SSF55048">
    <property type="entry name" value="Probable ACP-binding domain of malonyl-CoA ACP transacylase"/>
    <property type="match status" value="1"/>
</dbReference>
<dbReference type="SUPFAM" id="SSF53335">
    <property type="entry name" value="S-adenosyl-L-methionine-dependent methyltransferases"/>
    <property type="match status" value="1"/>
</dbReference>
<dbReference type="SUPFAM" id="SSF53901">
    <property type="entry name" value="Thiolase-like"/>
    <property type="match status" value="1"/>
</dbReference>
<dbReference type="PROSITE" id="PS50075">
    <property type="entry name" value="CARRIER"/>
    <property type="match status" value="1"/>
</dbReference>
<dbReference type="PROSITE" id="PS52004">
    <property type="entry name" value="KS3_2"/>
    <property type="match status" value="1"/>
</dbReference>
<dbReference type="PROSITE" id="PS00012">
    <property type="entry name" value="PHOSPHOPANTETHEINE"/>
    <property type="match status" value="1"/>
</dbReference>
<dbReference type="PROSITE" id="PS52019">
    <property type="entry name" value="PKS_MFAS_DH"/>
    <property type="match status" value="1"/>
</dbReference>
<accession>Q86ZD9</accession>
<gene>
    <name evidence="8" type="primary">pks1</name>
</gene>
<comment type="function">
    <text evidence="6">Highly reducing polyketide synthase (HR-PKS); part of the gene cluster that mediates the biosynthesis of squalestatin S1 (SQS1, also known as zaragozic acid A), a lead compound for the treatment of hyper-cholesterolemia by targeting squalene synthase (SS) (PubMed:15489970). Pks1 is responsible for the biosynthesis of the tetraketide sidechain of SQS1 (PubMed:15489970). The biosynthesis must involve 3 rounds of chain extension. After the first and second rounds methyl-transfer occurs, and in all rounds of extension the ketoreductase and dehydratase are active. The enoyl reductase and C-MeT are not active in the final round of extension (PubMed:15489970).</text>
</comment>
<comment type="pathway">
    <text evidence="6">Secondary metabolite biosynthesis.</text>
</comment>
<comment type="domain">
    <text evidence="9">Multidomain protein; including a ketosynthase (KS) that catalyzes repeated decarboxylative condensation to elongate the polyketide backbone; a malonyl-CoA:ACP transacylase (MAT) that selects and transfers the extender unit malonyl-CoA; a dehydratase (DH) domain that reduces hydroxyl groups to enoyl groups; a methyltransferase (CMeT) domain responsible for the incorporation of methyl groups; an enoylreductase (ER) domain that reduces enoyl groups to alkyl group; a ketoreductase (KR) domain that catalyzes beta-ketoreduction steps; and an acyl-carrier protein (ACP) that serves as the tether of the growing and completed polyketide via its phosphopantetheinyl arm.</text>
</comment>
<organism>
    <name type="scientific">Phoma sp. (strain C2932)</name>
    <dbReference type="NCBI Taxonomy" id="86977"/>
    <lineage>
        <taxon>Eukaryota</taxon>
        <taxon>Fungi</taxon>
        <taxon>Dikarya</taxon>
        <taxon>Ascomycota</taxon>
        <taxon>Pezizomycotina</taxon>
        <taxon>Dothideomycetes</taxon>
        <taxon>Pleosporomycetidae</taxon>
        <taxon>Pleosporales</taxon>
        <taxon>Pleosporineae</taxon>
        <taxon>Didymellaceae</taxon>
        <taxon>Phoma</taxon>
    </lineage>
</organism>